<reference key="1">
    <citation type="journal article" date="2005" name="J. Bacteriol.">
        <title>Complete genome sequence and analysis of the multiresistant nosocomial pathogen Corynebacterium jeikeium K411, a lipid-requiring bacterium of the human skin flora.</title>
        <authorList>
            <person name="Tauch A."/>
            <person name="Kaiser O."/>
            <person name="Hain T."/>
            <person name="Goesmann A."/>
            <person name="Weisshaar B."/>
            <person name="Albersmeier A."/>
            <person name="Bekel T."/>
            <person name="Bischoff N."/>
            <person name="Brune I."/>
            <person name="Chakraborty T."/>
            <person name="Kalinowski J."/>
            <person name="Meyer F."/>
            <person name="Rupp O."/>
            <person name="Schneiker S."/>
            <person name="Viehoever P."/>
            <person name="Puehler A."/>
        </authorList>
    </citation>
    <scope>NUCLEOTIDE SEQUENCE [LARGE SCALE GENOMIC DNA]</scope>
    <source>
        <strain>K411</strain>
    </source>
</reference>
<name>HIS7_CORJK</name>
<gene>
    <name evidence="1" type="primary">hisB</name>
    <name type="ordered locus">jk0788</name>
</gene>
<sequence>MATNPTPRIGKAQRATKESDIQVEWNLDGTGKTDIDTGVPFFDHMLTALGAHGSFDLKVHARGDVEIDAHHTVEDTAIVMGQALAQALGDKAGIRRFGDAFIPMDETLAHAAVDVSGRPYYVGVGEPEQMLSSVIGGHYATVINQHFFETLALNSRIALHVRCLYGRDPHHITEAEFKAVARALRAAVEDDPRVGGVPSTKGTL</sequence>
<protein>
    <recommendedName>
        <fullName evidence="1">Imidazoleglycerol-phosphate dehydratase</fullName>
        <shortName evidence="1">IGPD</shortName>
        <ecNumber evidence="1">4.2.1.19</ecNumber>
    </recommendedName>
</protein>
<organism>
    <name type="scientific">Corynebacterium jeikeium (strain K411)</name>
    <dbReference type="NCBI Taxonomy" id="306537"/>
    <lineage>
        <taxon>Bacteria</taxon>
        <taxon>Bacillati</taxon>
        <taxon>Actinomycetota</taxon>
        <taxon>Actinomycetes</taxon>
        <taxon>Mycobacteriales</taxon>
        <taxon>Corynebacteriaceae</taxon>
        <taxon>Corynebacterium</taxon>
    </lineage>
</organism>
<feature type="chain" id="PRO_0000336308" description="Imidazoleglycerol-phosphate dehydratase">
    <location>
        <begin position="1"/>
        <end position="204"/>
    </location>
</feature>
<dbReference type="EC" id="4.2.1.19" evidence="1"/>
<dbReference type="EMBL" id="CR931997">
    <property type="protein sequence ID" value="CAI36950.1"/>
    <property type="molecule type" value="Genomic_DNA"/>
</dbReference>
<dbReference type="RefSeq" id="WP_011273393.1">
    <property type="nucleotide sequence ID" value="NC_007164.1"/>
</dbReference>
<dbReference type="SMR" id="Q4JW57"/>
<dbReference type="STRING" id="306537.jk0788"/>
<dbReference type="KEGG" id="cjk:jk0788"/>
<dbReference type="PATRIC" id="fig|306537.10.peg.797"/>
<dbReference type="eggNOG" id="COG0131">
    <property type="taxonomic scope" value="Bacteria"/>
</dbReference>
<dbReference type="HOGENOM" id="CLU_044308_3_0_11"/>
<dbReference type="OrthoDB" id="9790411at2"/>
<dbReference type="UniPathway" id="UPA00031">
    <property type="reaction ID" value="UER00011"/>
</dbReference>
<dbReference type="Proteomes" id="UP000000545">
    <property type="component" value="Chromosome"/>
</dbReference>
<dbReference type="GO" id="GO:0005737">
    <property type="term" value="C:cytoplasm"/>
    <property type="evidence" value="ECO:0007669"/>
    <property type="project" value="UniProtKB-SubCell"/>
</dbReference>
<dbReference type="GO" id="GO:0004424">
    <property type="term" value="F:imidazoleglycerol-phosphate dehydratase activity"/>
    <property type="evidence" value="ECO:0007669"/>
    <property type="project" value="UniProtKB-UniRule"/>
</dbReference>
<dbReference type="GO" id="GO:0000105">
    <property type="term" value="P:L-histidine biosynthetic process"/>
    <property type="evidence" value="ECO:0007669"/>
    <property type="project" value="UniProtKB-UniRule"/>
</dbReference>
<dbReference type="CDD" id="cd07914">
    <property type="entry name" value="IGPD"/>
    <property type="match status" value="1"/>
</dbReference>
<dbReference type="FunFam" id="3.30.230.40:FF:000001">
    <property type="entry name" value="Imidazoleglycerol-phosphate dehydratase HisB"/>
    <property type="match status" value="1"/>
</dbReference>
<dbReference type="FunFam" id="3.30.230.40:FF:000003">
    <property type="entry name" value="Imidazoleglycerol-phosphate dehydratase HisB"/>
    <property type="match status" value="1"/>
</dbReference>
<dbReference type="Gene3D" id="3.30.230.40">
    <property type="entry name" value="Imidazole glycerol phosphate dehydratase, domain 1"/>
    <property type="match status" value="2"/>
</dbReference>
<dbReference type="HAMAP" id="MF_00076">
    <property type="entry name" value="HisB"/>
    <property type="match status" value="1"/>
</dbReference>
<dbReference type="InterPro" id="IPR038494">
    <property type="entry name" value="IGPD_sf"/>
</dbReference>
<dbReference type="InterPro" id="IPR000807">
    <property type="entry name" value="ImidazoleglycerolP_deHydtase"/>
</dbReference>
<dbReference type="InterPro" id="IPR020565">
    <property type="entry name" value="ImidazoleglycerP_deHydtase_CS"/>
</dbReference>
<dbReference type="InterPro" id="IPR020568">
    <property type="entry name" value="Ribosomal_Su5_D2-typ_SF"/>
</dbReference>
<dbReference type="NCBIfam" id="NF002110">
    <property type="entry name" value="PRK00951.1-6"/>
    <property type="match status" value="1"/>
</dbReference>
<dbReference type="NCBIfam" id="NF002111">
    <property type="entry name" value="PRK00951.2-1"/>
    <property type="match status" value="1"/>
</dbReference>
<dbReference type="NCBIfam" id="NF002114">
    <property type="entry name" value="PRK00951.2-4"/>
    <property type="match status" value="1"/>
</dbReference>
<dbReference type="PANTHER" id="PTHR23133:SF2">
    <property type="entry name" value="IMIDAZOLEGLYCEROL-PHOSPHATE DEHYDRATASE"/>
    <property type="match status" value="1"/>
</dbReference>
<dbReference type="PANTHER" id="PTHR23133">
    <property type="entry name" value="IMIDAZOLEGLYCEROL-PHOSPHATE DEHYDRATASE HIS7"/>
    <property type="match status" value="1"/>
</dbReference>
<dbReference type="Pfam" id="PF00475">
    <property type="entry name" value="IGPD"/>
    <property type="match status" value="1"/>
</dbReference>
<dbReference type="SUPFAM" id="SSF54211">
    <property type="entry name" value="Ribosomal protein S5 domain 2-like"/>
    <property type="match status" value="2"/>
</dbReference>
<dbReference type="PROSITE" id="PS00954">
    <property type="entry name" value="IGP_DEHYDRATASE_1"/>
    <property type="match status" value="1"/>
</dbReference>
<dbReference type="PROSITE" id="PS00955">
    <property type="entry name" value="IGP_DEHYDRATASE_2"/>
    <property type="match status" value="1"/>
</dbReference>
<keyword id="KW-0028">Amino-acid biosynthesis</keyword>
<keyword id="KW-0963">Cytoplasm</keyword>
<keyword id="KW-0368">Histidine biosynthesis</keyword>
<keyword id="KW-0456">Lyase</keyword>
<keyword id="KW-1185">Reference proteome</keyword>
<proteinExistence type="inferred from homology"/>
<accession>Q4JW57</accession>
<evidence type="ECO:0000255" key="1">
    <source>
        <dbReference type="HAMAP-Rule" id="MF_00076"/>
    </source>
</evidence>
<comment type="catalytic activity">
    <reaction evidence="1">
        <text>D-erythro-1-(imidazol-4-yl)glycerol 3-phosphate = 3-(imidazol-4-yl)-2-oxopropyl phosphate + H2O</text>
        <dbReference type="Rhea" id="RHEA:11040"/>
        <dbReference type="ChEBI" id="CHEBI:15377"/>
        <dbReference type="ChEBI" id="CHEBI:57766"/>
        <dbReference type="ChEBI" id="CHEBI:58278"/>
        <dbReference type="EC" id="4.2.1.19"/>
    </reaction>
</comment>
<comment type="pathway">
    <text evidence="1">Amino-acid biosynthesis; L-histidine biosynthesis; L-histidine from 5-phospho-alpha-D-ribose 1-diphosphate: step 6/9.</text>
</comment>
<comment type="subcellular location">
    <subcellularLocation>
        <location evidence="1">Cytoplasm</location>
    </subcellularLocation>
</comment>
<comment type="similarity">
    <text evidence="1">Belongs to the imidazoleglycerol-phosphate dehydratase family.</text>
</comment>